<evidence type="ECO:0000255" key="1">
    <source>
        <dbReference type="PROSITE-ProRule" id="PRU00253"/>
    </source>
</evidence>
<evidence type="ECO:0000269" key="2">
    <source>
    </source>
</evidence>
<evidence type="ECO:0000269" key="3">
    <source>
    </source>
</evidence>
<evidence type="ECO:0000305" key="4"/>
<evidence type="ECO:0007744" key="5">
    <source>
        <dbReference type="PDB" id="2F6G"/>
    </source>
</evidence>
<evidence type="ECO:0007744" key="6">
    <source>
        <dbReference type="PDB" id="2F6P"/>
    </source>
</evidence>
<evidence type="ECO:0007744" key="7">
    <source>
        <dbReference type="PDB" id="2F78"/>
    </source>
</evidence>
<evidence type="ECO:0007744" key="8">
    <source>
        <dbReference type="PDB" id="2F7A"/>
    </source>
</evidence>
<evidence type="ECO:0007744" key="9">
    <source>
        <dbReference type="PDB" id="2F8D"/>
    </source>
</evidence>
<evidence type="ECO:0007744" key="10">
    <source>
        <dbReference type="PDB" id="2F97"/>
    </source>
</evidence>
<evidence type="ECO:0007829" key="11">
    <source>
        <dbReference type="PDB" id="2F7A"/>
    </source>
</evidence>
<evidence type="ECO:0007829" key="12">
    <source>
        <dbReference type="PDB" id="2H9B"/>
    </source>
</evidence>
<evidence type="ECO:0007829" key="13">
    <source>
        <dbReference type="PDB" id="3K1P"/>
    </source>
</evidence>
<evidence type="ECO:0007829" key="14">
    <source>
        <dbReference type="PDB" id="3M1E"/>
    </source>
</evidence>
<evidence type="ECO:0007829" key="15">
    <source>
        <dbReference type="PDB" id="4IHS"/>
    </source>
</evidence>
<accession>O68014</accession>
<accession>Q6FCB2</accession>
<proteinExistence type="evidence at protein level"/>
<gene>
    <name type="primary">benM</name>
    <name type="synonym">benR</name>
    <name type="ordered locus">ACIAD1435</name>
</gene>
<feature type="chain" id="PRO_0000105594" description="HTH-type transcriptional regulator BenM">
    <location>
        <begin position="1"/>
        <end position="304"/>
    </location>
</feature>
<feature type="domain" description="HTH lysR-type" evidence="1">
    <location>
        <begin position="1"/>
        <end position="58"/>
    </location>
</feature>
<feature type="DNA-binding region" description="H-T-H motif" evidence="1">
    <location>
        <begin position="18"/>
        <end position="37"/>
    </location>
</feature>
<feature type="binding site" evidence="7 9">
    <location>
        <position position="99"/>
    </location>
    <ligand>
        <name>benzoate</name>
        <dbReference type="ChEBI" id="CHEBI:16150"/>
        <label>1</label>
    </ligand>
</feature>
<feature type="binding site" evidence="8">
    <location>
        <position position="99"/>
    </location>
    <ligand>
        <name>cis,cis-muconate</name>
        <dbReference type="ChEBI" id="CHEBI:32379"/>
    </ligand>
</feature>
<feature type="binding site" evidence="7 8">
    <location>
        <position position="104"/>
    </location>
    <ligand>
        <name>benzoate</name>
        <dbReference type="ChEBI" id="CHEBI:16150"/>
        <label>2</label>
    </ligand>
</feature>
<feature type="binding site" evidence="8">
    <location>
        <position position="128"/>
    </location>
    <ligand>
        <name>cis,cis-muconate</name>
        <dbReference type="ChEBI" id="CHEBI:32379"/>
    </ligand>
</feature>
<feature type="binding site" evidence="7">
    <location>
        <position position="144"/>
    </location>
    <ligand>
        <name>benzoate</name>
        <dbReference type="ChEBI" id="CHEBI:16150"/>
        <label>2</label>
    </ligand>
</feature>
<feature type="binding site" evidence="7 8">
    <location>
        <position position="160"/>
    </location>
    <ligand>
        <name>benzoate</name>
        <dbReference type="ChEBI" id="CHEBI:16150"/>
        <label>2</label>
    </ligand>
</feature>
<feature type="binding site" evidence="8">
    <location>
        <position position="202"/>
    </location>
    <ligand>
        <name>benzoate</name>
        <dbReference type="ChEBI" id="CHEBI:16150"/>
        <label>2</label>
    </ligand>
</feature>
<feature type="binding site" evidence="8">
    <location>
        <position position="203"/>
    </location>
    <ligand>
        <name>cis,cis-muconate</name>
        <dbReference type="ChEBI" id="CHEBI:32379"/>
    </ligand>
</feature>
<feature type="binding site" evidence="7 8">
    <location>
        <position position="293"/>
    </location>
    <ligand>
        <name>benzoate</name>
        <dbReference type="ChEBI" id="CHEBI:16150"/>
        <label>2</label>
    </ligand>
</feature>
<feature type="sequence conflict" description="In Ref. 1; AAC46441." evidence="4" ref="1">
    <original>T</original>
    <variation>S</variation>
    <location>
        <position position="157"/>
    </location>
</feature>
<feature type="helix" evidence="14">
    <location>
        <begin position="3"/>
        <end position="15"/>
    </location>
</feature>
<feature type="helix" evidence="14">
    <location>
        <begin position="18"/>
        <end position="24"/>
    </location>
</feature>
<feature type="helix" evidence="14">
    <location>
        <begin position="29"/>
        <end position="43"/>
    </location>
</feature>
<feature type="strand" evidence="15">
    <location>
        <begin position="51"/>
        <end position="54"/>
    </location>
</feature>
<feature type="helix" evidence="14">
    <location>
        <begin position="59"/>
        <end position="86"/>
    </location>
</feature>
<feature type="strand" evidence="12">
    <location>
        <begin position="91"/>
        <end position="96"/>
    </location>
</feature>
<feature type="helix" evidence="12">
    <location>
        <begin position="98"/>
        <end position="102"/>
    </location>
</feature>
<feature type="helix" evidence="12">
    <location>
        <begin position="105"/>
        <end position="114"/>
    </location>
</feature>
<feature type="strand" evidence="12">
    <location>
        <begin position="120"/>
        <end position="125"/>
    </location>
</feature>
<feature type="helix" evidence="12">
    <location>
        <begin position="128"/>
        <end position="136"/>
    </location>
</feature>
<feature type="strand" evidence="12">
    <location>
        <begin position="141"/>
        <end position="147"/>
    </location>
</feature>
<feature type="strand" evidence="12">
    <location>
        <begin position="154"/>
        <end position="169"/>
    </location>
</feature>
<feature type="helix" evidence="12">
    <location>
        <begin position="173"/>
        <end position="177"/>
    </location>
</feature>
<feature type="turn" evidence="12">
    <location>
        <begin position="178"/>
        <end position="180"/>
    </location>
</feature>
<feature type="helix" evidence="12">
    <location>
        <begin position="184"/>
        <end position="186"/>
    </location>
</feature>
<feature type="turn" evidence="13">
    <location>
        <begin position="187"/>
        <end position="189"/>
    </location>
</feature>
<feature type="strand" evidence="12">
    <location>
        <begin position="190"/>
        <end position="194"/>
    </location>
</feature>
<feature type="strand" evidence="12">
    <location>
        <begin position="198"/>
        <end position="202"/>
    </location>
</feature>
<feature type="helix" evidence="12">
    <location>
        <begin position="203"/>
        <end position="212"/>
    </location>
</feature>
<feature type="turn" evidence="12">
    <location>
        <begin position="213"/>
        <end position="215"/>
    </location>
</feature>
<feature type="strand" evidence="12">
    <location>
        <begin position="219"/>
        <end position="223"/>
    </location>
</feature>
<feature type="helix" evidence="12">
    <location>
        <begin position="227"/>
        <end position="235"/>
    </location>
</feature>
<feature type="strand" evidence="12">
    <location>
        <begin position="240"/>
        <end position="244"/>
    </location>
</feature>
<feature type="helix" evidence="12">
    <location>
        <begin position="245"/>
        <end position="249"/>
    </location>
</feature>
<feature type="strand" evidence="12">
    <location>
        <begin position="255"/>
        <end position="260"/>
    </location>
</feature>
<feature type="strand" evidence="12">
    <location>
        <begin position="266"/>
        <end position="274"/>
    </location>
</feature>
<feature type="helix" evidence="12">
    <location>
        <begin position="280"/>
        <end position="296"/>
    </location>
</feature>
<feature type="turn" evidence="11">
    <location>
        <begin position="302"/>
        <end position="304"/>
    </location>
</feature>
<comment type="function">
    <text>Positive regulator of the ben and cat genes for benzoate degradation. BenM is necessary for ben gene expression but not for expression of the cat genes, which can be regulated by CatM. Binds to the inducers cis,cis-muconate and benzoate.</text>
</comment>
<comment type="subunit">
    <text evidence="3">Homotetramer; dimer of dimers. The dimers can also associate to form linear, higher oligomers (in vitro).</text>
</comment>
<comment type="domain">
    <text evidence="2">Contains a secondary binding site for benzoate in addition to a primary effector binding site that can accommodate either cis,cis-muconate or benzoate. The existence of this secondary binding site may explain the synergistic effects of cis,cis-muconate and benzoate.</text>
</comment>
<comment type="similarity">
    <text evidence="4">Belongs to the LysR transcriptional regulatory family.</text>
</comment>
<reference key="1">
    <citation type="journal article" date="1998" name="J. Bacteriol.">
        <title>Regulation of benzoate degradation in Acinetobacter sp. strain ADP1 by BenM, a LysR-type transcriptional activator.</title>
        <authorList>
            <person name="Collier L.S."/>
            <person name="Gaines G.L. III"/>
            <person name="Neidel E.L."/>
        </authorList>
    </citation>
    <scope>NUCLEOTIDE SEQUENCE [GENOMIC DNA]</scope>
</reference>
<reference key="2">
    <citation type="journal article" date="2004" name="Nucleic Acids Res.">
        <title>Unique features revealed by the genome sequence of Acinetobacter sp. ADP1, a versatile and naturally transformation competent bacterium.</title>
        <authorList>
            <person name="Barbe V."/>
            <person name="Vallenet D."/>
            <person name="Fonknechten N."/>
            <person name="Kreimeyer A."/>
            <person name="Oztas S."/>
            <person name="Labarre L."/>
            <person name="Cruveiller S."/>
            <person name="Robert C."/>
            <person name="Duprat S."/>
            <person name="Wincker P."/>
            <person name="Ornston L.N."/>
            <person name="Weissenbach J."/>
            <person name="Marliere P."/>
            <person name="Cohen G.N."/>
            <person name="Medigue C."/>
        </authorList>
    </citation>
    <scope>NUCLEOTIDE SEQUENCE [LARGE SCALE GENOMIC DNA]</scope>
    <source>
        <strain>ATCC 33305 / BD413 / ADP1</strain>
    </source>
</reference>
<reference evidence="9 10" key="3">
    <citation type="journal article" date="2007" name="Acta Crystallogr. F">
        <title>Oligomerization of BenM, a LysR-type transcriptional regulator: structural basis for the aggregation of proteins in this family.</title>
        <authorList>
            <person name="Ezezika O.C."/>
            <person name="Haddad S."/>
            <person name="Neidle E.L."/>
            <person name="Momany C."/>
        </authorList>
    </citation>
    <scope>X-RAY CRYSTALLOGRAPHY (2.20 ANGSTROMS) OF 81-304 IN COMPLEX WITH THE EFFECTOR BENZOATE</scope>
    <scope>SUBUNIT</scope>
</reference>
<reference evidence="5 6 7 8" key="4">
    <citation type="journal article" date="2007" name="J. Mol. Biol.">
        <title>Distinct effector-binding sites enable synergistic transcriptional activation by BenM, a LysR-type regulator.</title>
        <authorList>
            <person name="Ezezika O.C."/>
            <person name="Haddad S."/>
            <person name="Clark T.J."/>
            <person name="Neidle E.L."/>
            <person name="Momany C."/>
        </authorList>
    </citation>
    <scope>X-RAY CRYSTALLOGRAPHY (1.90 ANGSTROMS) OF 81-304 IN COMPLEXES WITH THE EFFECTORS BENZOATE AND CIS,CIS-MUCONATE</scope>
    <scope>DOMAIN</scope>
</reference>
<name>BENM_ACIAD</name>
<protein>
    <recommendedName>
        <fullName>HTH-type transcriptional regulator BenM</fullName>
    </recommendedName>
    <alternativeName>
        <fullName>Ben and cat operon transcriptional regulator</fullName>
    </alternativeName>
</protein>
<dbReference type="EMBL" id="AF009224">
    <property type="protein sequence ID" value="AAC46441.1"/>
    <property type="molecule type" value="Genomic_DNA"/>
</dbReference>
<dbReference type="EMBL" id="CR543861">
    <property type="protein sequence ID" value="CAG68299.1"/>
    <property type="molecule type" value="Genomic_DNA"/>
</dbReference>
<dbReference type="RefSeq" id="WP_004925500.1">
    <property type="nucleotide sequence ID" value="NC_005966.1"/>
</dbReference>
<dbReference type="PDB" id="2F6G">
    <property type="method" value="X-ray"/>
    <property type="resolution" value="1.91 A"/>
    <property type="chains" value="A/B=81-304"/>
</dbReference>
<dbReference type="PDB" id="2F6P">
    <property type="method" value="X-ray"/>
    <property type="resolution" value="2.00 A"/>
    <property type="chains" value="A/B=81-304"/>
</dbReference>
<dbReference type="PDB" id="2F78">
    <property type="method" value="X-ray"/>
    <property type="resolution" value="2.05 A"/>
    <property type="chains" value="A/B=81-304"/>
</dbReference>
<dbReference type="PDB" id="2F7A">
    <property type="method" value="X-ray"/>
    <property type="resolution" value="1.90 A"/>
    <property type="chains" value="A/B=81-304"/>
</dbReference>
<dbReference type="PDB" id="2F8D">
    <property type="method" value="X-ray"/>
    <property type="resolution" value="2.70 A"/>
    <property type="chains" value="A/B=81-304"/>
</dbReference>
<dbReference type="PDB" id="2F97">
    <property type="method" value="X-ray"/>
    <property type="resolution" value="2.20 A"/>
    <property type="chains" value="A=81-304"/>
</dbReference>
<dbReference type="PDB" id="2H99">
    <property type="method" value="X-ray"/>
    <property type="resolution" value="1.85 A"/>
    <property type="chains" value="A/B=1-304"/>
</dbReference>
<dbReference type="PDB" id="2H9B">
    <property type="method" value="X-ray"/>
    <property type="resolution" value="1.80 A"/>
    <property type="chains" value="A/B=1-304"/>
</dbReference>
<dbReference type="PDB" id="3K1M">
    <property type="method" value="X-ray"/>
    <property type="resolution" value="2.29 A"/>
    <property type="chains" value="A/B=1-304"/>
</dbReference>
<dbReference type="PDB" id="3K1N">
    <property type="method" value="X-ray"/>
    <property type="resolution" value="2.99 A"/>
    <property type="chains" value="A/B=1-304"/>
</dbReference>
<dbReference type="PDB" id="3K1P">
    <property type="method" value="X-ray"/>
    <property type="resolution" value="3.00 A"/>
    <property type="chains" value="A/B=1-304"/>
</dbReference>
<dbReference type="PDB" id="3M1E">
    <property type="method" value="X-ray"/>
    <property type="resolution" value="1.80 A"/>
    <property type="chains" value="A=1-87"/>
</dbReference>
<dbReference type="PDB" id="4IHS">
    <property type="method" value="X-ray"/>
    <property type="resolution" value="3.10 A"/>
    <property type="chains" value="A/B/C/D=1-87"/>
</dbReference>
<dbReference type="PDB" id="4IHT">
    <property type="method" value="X-ray"/>
    <property type="resolution" value="3.00 A"/>
    <property type="chains" value="A/B/C/D=1-87"/>
</dbReference>
<dbReference type="PDBsum" id="2F6G"/>
<dbReference type="PDBsum" id="2F6P"/>
<dbReference type="PDBsum" id="2F78"/>
<dbReference type="PDBsum" id="2F7A"/>
<dbReference type="PDBsum" id="2F8D"/>
<dbReference type="PDBsum" id="2F97"/>
<dbReference type="PDBsum" id="2H99"/>
<dbReference type="PDBsum" id="2H9B"/>
<dbReference type="PDBsum" id="3K1M"/>
<dbReference type="PDBsum" id="3K1N"/>
<dbReference type="PDBsum" id="3K1P"/>
<dbReference type="PDBsum" id="3M1E"/>
<dbReference type="PDBsum" id="4IHS"/>
<dbReference type="PDBsum" id="4IHT"/>
<dbReference type="SMR" id="O68014"/>
<dbReference type="STRING" id="202950.GCA_001485005_01190"/>
<dbReference type="GeneID" id="45233848"/>
<dbReference type="KEGG" id="aci:ACIAD1435"/>
<dbReference type="eggNOG" id="COG0583">
    <property type="taxonomic scope" value="Bacteria"/>
</dbReference>
<dbReference type="HOGENOM" id="CLU_039613_6_4_6"/>
<dbReference type="OrthoDB" id="5289754at2"/>
<dbReference type="BioCyc" id="ASP62977:ACIAD_RS06630-MONOMER"/>
<dbReference type="EvolutionaryTrace" id="O68014"/>
<dbReference type="Proteomes" id="UP000000430">
    <property type="component" value="Chromosome"/>
</dbReference>
<dbReference type="GO" id="GO:0032993">
    <property type="term" value="C:protein-DNA complex"/>
    <property type="evidence" value="ECO:0007669"/>
    <property type="project" value="TreeGrafter"/>
</dbReference>
<dbReference type="GO" id="GO:0003677">
    <property type="term" value="F:DNA binding"/>
    <property type="evidence" value="ECO:0007669"/>
    <property type="project" value="UniProtKB-KW"/>
</dbReference>
<dbReference type="GO" id="GO:0003700">
    <property type="term" value="F:DNA-binding transcription factor activity"/>
    <property type="evidence" value="ECO:0007669"/>
    <property type="project" value="InterPro"/>
</dbReference>
<dbReference type="GO" id="GO:0009056">
    <property type="term" value="P:catabolic process"/>
    <property type="evidence" value="ECO:0007669"/>
    <property type="project" value="UniProtKB-KW"/>
</dbReference>
<dbReference type="CDD" id="cd08445">
    <property type="entry name" value="PBP2_BenM_CatM_CatR"/>
    <property type="match status" value="1"/>
</dbReference>
<dbReference type="FunFam" id="1.10.10.10:FF:000001">
    <property type="entry name" value="LysR family transcriptional regulator"/>
    <property type="match status" value="1"/>
</dbReference>
<dbReference type="Gene3D" id="3.40.190.10">
    <property type="entry name" value="Periplasmic binding protein-like II"/>
    <property type="match status" value="2"/>
</dbReference>
<dbReference type="Gene3D" id="1.10.10.10">
    <property type="entry name" value="Winged helix-like DNA-binding domain superfamily/Winged helix DNA-binding domain"/>
    <property type="match status" value="1"/>
</dbReference>
<dbReference type="InterPro" id="IPR005119">
    <property type="entry name" value="LysR_subst-bd"/>
</dbReference>
<dbReference type="InterPro" id="IPR000847">
    <property type="entry name" value="Tscrpt_reg_HTH_LysR"/>
</dbReference>
<dbReference type="InterPro" id="IPR036388">
    <property type="entry name" value="WH-like_DNA-bd_sf"/>
</dbReference>
<dbReference type="InterPro" id="IPR036390">
    <property type="entry name" value="WH_DNA-bd_sf"/>
</dbReference>
<dbReference type="NCBIfam" id="NF040709">
    <property type="entry name" value="benzoate_BenM"/>
    <property type="match status" value="1"/>
</dbReference>
<dbReference type="PANTHER" id="PTHR30346:SF17">
    <property type="entry name" value="LYSR FAMILY TRANSCRIPTIONAL REGULATOR"/>
    <property type="match status" value="1"/>
</dbReference>
<dbReference type="PANTHER" id="PTHR30346">
    <property type="entry name" value="TRANSCRIPTIONAL DUAL REGULATOR HCAR-RELATED"/>
    <property type="match status" value="1"/>
</dbReference>
<dbReference type="Pfam" id="PF00126">
    <property type="entry name" value="HTH_1"/>
    <property type="match status" value="1"/>
</dbReference>
<dbReference type="Pfam" id="PF03466">
    <property type="entry name" value="LysR_substrate"/>
    <property type="match status" value="1"/>
</dbReference>
<dbReference type="PRINTS" id="PR00039">
    <property type="entry name" value="HTHLYSR"/>
</dbReference>
<dbReference type="SUPFAM" id="SSF53850">
    <property type="entry name" value="Periplasmic binding protein-like II"/>
    <property type="match status" value="1"/>
</dbReference>
<dbReference type="SUPFAM" id="SSF46785">
    <property type="entry name" value="Winged helix' DNA-binding domain"/>
    <property type="match status" value="1"/>
</dbReference>
<dbReference type="PROSITE" id="PS50931">
    <property type="entry name" value="HTH_LYSR"/>
    <property type="match status" value="1"/>
</dbReference>
<organism>
    <name type="scientific">Acinetobacter baylyi (strain ATCC 33305 / BD413 / ADP1)</name>
    <dbReference type="NCBI Taxonomy" id="62977"/>
    <lineage>
        <taxon>Bacteria</taxon>
        <taxon>Pseudomonadati</taxon>
        <taxon>Pseudomonadota</taxon>
        <taxon>Gammaproteobacteria</taxon>
        <taxon>Moraxellales</taxon>
        <taxon>Moraxellaceae</taxon>
        <taxon>Acinetobacter</taxon>
    </lineage>
</organism>
<sequence>MELRHLRYFVAVVEEQSFTKAADKLCIAQPPLSRQIQNLEEELGIQLLERGSRPVKTTPEGHFFYQYAIKLLSNVDQMVSMTKRIASVEKTIRIGFVGSLLFGLLPRIIHLYRQAHPNLRIELYEMGTKAQTEALKEGRIDAGFGRLKISDPAIKRTLLRNERLMVAVHASHPLNQMKDKGVHLNDLIDEKILLYPSSPKPNFSTHVMNIFSDHGLEPTKINEVREVQLALGLVAAGEGISLVPASTQSIQLFNLSYVPLLDPDAITPIYIAVRNMEESTYIYSLYETIRQIYAYEGFTEPPNW</sequence>
<keyword id="KW-0002">3D-structure</keyword>
<keyword id="KW-0010">Activator</keyword>
<keyword id="KW-0058">Aromatic hydrocarbons catabolism</keyword>
<keyword id="KW-0238">DNA-binding</keyword>
<keyword id="KW-0804">Transcription</keyword>
<keyword id="KW-0805">Transcription regulation</keyword>